<proteinExistence type="inferred from homology"/>
<reference key="1">
    <citation type="journal article" date="2003" name="Genome Res.">
        <title>Comparative genome analysis of Vibrio vulnificus, a marine pathogen.</title>
        <authorList>
            <person name="Chen C.-Y."/>
            <person name="Wu K.-M."/>
            <person name="Chang Y.-C."/>
            <person name="Chang C.-H."/>
            <person name="Tsai H.-C."/>
            <person name="Liao T.-L."/>
            <person name="Liu Y.-M."/>
            <person name="Chen H.-J."/>
            <person name="Shen A.B.-T."/>
            <person name="Li J.-C."/>
            <person name="Su T.-L."/>
            <person name="Shao C.-P."/>
            <person name="Lee C.-T."/>
            <person name="Hor L.-I."/>
            <person name="Tsai S.-F."/>
        </authorList>
    </citation>
    <scope>NUCLEOTIDE SEQUENCE [LARGE SCALE GENOMIC DNA]</scope>
    <source>
        <strain>YJ016</strain>
    </source>
</reference>
<gene>
    <name evidence="1" type="primary">gppA</name>
    <name type="ordered locus">VV3184</name>
</gene>
<organism>
    <name type="scientific">Vibrio vulnificus (strain YJ016)</name>
    <dbReference type="NCBI Taxonomy" id="196600"/>
    <lineage>
        <taxon>Bacteria</taxon>
        <taxon>Pseudomonadati</taxon>
        <taxon>Pseudomonadota</taxon>
        <taxon>Gammaproteobacteria</taxon>
        <taxon>Vibrionales</taxon>
        <taxon>Vibrionaceae</taxon>
        <taxon>Vibrio</taxon>
    </lineage>
</organism>
<keyword id="KW-0378">Hydrolase</keyword>
<name>GPPA_VIBVY</name>
<comment type="function">
    <text evidence="1">Catalyzes the conversion of pppGpp to ppGpp. Guanosine pentaphosphate (pppGpp) is a cytoplasmic signaling molecule which together with ppGpp controls the 'stringent response', an adaptive process that allows bacteria to respond to amino acid starvation, resulting in the coordinated regulation of numerous cellular activities.</text>
</comment>
<comment type="catalytic activity">
    <reaction evidence="1">
        <text>guanosine 3'-diphosphate 5'-triphosphate + H2O = guanosine 3',5'-bis(diphosphate) + phosphate + H(+)</text>
        <dbReference type="Rhea" id="RHEA:13073"/>
        <dbReference type="ChEBI" id="CHEBI:15377"/>
        <dbReference type="ChEBI" id="CHEBI:15378"/>
        <dbReference type="ChEBI" id="CHEBI:43474"/>
        <dbReference type="ChEBI" id="CHEBI:77828"/>
        <dbReference type="ChEBI" id="CHEBI:142410"/>
        <dbReference type="EC" id="3.6.1.40"/>
    </reaction>
</comment>
<comment type="pathway">
    <text evidence="1">Purine metabolism; ppGpp biosynthesis; ppGpp from GTP: step 2/2.</text>
</comment>
<comment type="similarity">
    <text evidence="1">Belongs to the GppA/Ppx family. GppA subfamily.</text>
</comment>
<comment type="sequence caution" evidence="2">
    <conflict type="erroneous initiation">
        <sequence resource="EMBL-CDS" id="BAC95948"/>
    </conflict>
</comment>
<protein>
    <recommendedName>
        <fullName evidence="1">Guanosine-5'-triphosphate,3'-diphosphate pyrophosphatase</fullName>
        <ecNumber evidence="1">3.6.1.40</ecNumber>
    </recommendedName>
    <alternativeName>
        <fullName evidence="1">Guanosine pentaphosphate phosphohydrolase</fullName>
    </alternativeName>
    <alternativeName>
        <fullName evidence="1">pppGpp-5'-phosphohydrolase</fullName>
    </alternativeName>
</protein>
<evidence type="ECO:0000255" key="1">
    <source>
        <dbReference type="HAMAP-Rule" id="MF_01550"/>
    </source>
</evidence>
<evidence type="ECO:0000305" key="2"/>
<sequence length="497" mass="54755">MSQAGNSPLYAAIDLGSNSFHMLVVRHIDGSVQTMAKIKRKVRLAAGLDEHNALSKEAMQRGWDCLSLFAERLQDIPAEHIRIVGTATLRTATNVDLFLQKANQILGHPIEVISGEEEAATIYKGVAHTSGGSGRRLVVDIGGASTELIIGEGFEAKALTSLKMGCVTWLENFFKDRQLSARNFEAAIEGAKQTLLPILEQYKSLGWDVCVGASGTVQALQEIMLAQGMDEVITHAKLKRLQKQAMLADHLEELEIEGLTLERALVFPSGLSILIAIFELLEIDAMTLAGGALREGLAYEMMSELRQDDIRARTIGSIQSRYQLDSQYGQQVANLALKLLQQVGDVMWIPEPQGAMLLETTAKLHEIGLTIDFKKGGEHSAYLMQHLDLPGFTRAQKFLMGEIARRYREGLTSLPEQHALSGNSGKRLLRLLRLAVILSHRRQPSLEPEVTLSAEGDKLTLAIDAQWLENNPLTAAELELEANRQTDIGWPLVIESR</sequence>
<feature type="chain" id="PRO_0000194296" description="Guanosine-5'-triphosphate,3'-diphosphate pyrophosphatase">
    <location>
        <begin position="1"/>
        <end position="497"/>
    </location>
</feature>
<accession>Q7MGP6</accession>
<dbReference type="EC" id="3.6.1.40" evidence="1"/>
<dbReference type="EMBL" id="BA000037">
    <property type="protein sequence ID" value="BAC95948.1"/>
    <property type="status" value="ALT_INIT"/>
    <property type="molecule type" value="Genomic_DNA"/>
</dbReference>
<dbReference type="RefSeq" id="WP_011078989.1">
    <property type="nucleotide sequence ID" value="NC_005139.1"/>
</dbReference>
<dbReference type="SMR" id="Q7MGP6"/>
<dbReference type="STRING" id="672.VV93_v1c29050"/>
<dbReference type="KEGG" id="vvy:VV3184"/>
<dbReference type="eggNOG" id="COG0248">
    <property type="taxonomic scope" value="Bacteria"/>
</dbReference>
<dbReference type="HOGENOM" id="CLU_025908_4_0_6"/>
<dbReference type="UniPathway" id="UPA00908">
    <property type="reaction ID" value="UER00885"/>
</dbReference>
<dbReference type="Proteomes" id="UP000002675">
    <property type="component" value="Chromosome I"/>
</dbReference>
<dbReference type="GO" id="GO:0008894">
    <property type="term" value="F:guanosine-5'-triphosphate,3'-diphosphate diphosphatase activity"/>
    <property type="evidence" value="ECO:0007669"/>
    <property type="project" value="UniProtKB-UniRule"/>
</dbReference>
<dbReference type="GO" id="GO:0015974">
    <property type="term" value="P:guanosine pentaphosphate catabolic process"/>
    <property type="evidence" value="ECO:0007669"/>
    <property type="project" value="InterPro"/>
</dbReference>
<dbReference type="GO" id="GO:0015970">
    <property type="term" value="P:guanosine tetraphosphate biosynthetic process"/>
    <property type="evidence" value="ECO:0007669"/>
    <property type="project" value="UniProtKB-UniRule"/>
</dbReference>
<dbReference type="GO" id="GO:0015949">
    <property type="term" value="P:nucleobase-containing small molecule interconversion"/>
    <property type="evidence" value="ECO:0007669"/>
    <property type="project" value="TreeGrafter"/>
</dbReference>
<dbReference type="FunFam" id="3.30.420.150:FF:000001">
    <property type="entry name" value="Guanosine-5'-triphosphate,3'-diphosphate pyrophosphatase"/>
    <property type="match status" value="1"/>
</dbReference>
<dbReference type="FunFam" id="3.30.420.40:FF:000023">
    <property type="entry name" value="Guanosine-5'-triphosphate,3'-diphosphate pyrophosphatase"/>
    <property type="match status" value="1"/>
</dbReference>
<dbReference type="Gene3D" id="3.30.420.40">
    <property type="match status" value="1"/>
</dbReference>
<dbReference type="Gene3D" id="3.30.420.150">
    <property type="entry name" value="Exopolyphosphatase. Domain 2"/>
    <property type="match status" value="1"/>
</dbReference>
<dbReference type="Gene3D" id="1.10.3210.10">
    <property type="entry name" value="Hypothetical protein af1432"/>
    <property type="match status" value="1"/>
</dbReference>
<dbReference type="HAMAP" id="MF_01550">
    <property type="entry name" value="GppA"/>
    <property type="match status" value="1"/>
</dbReference>
<dbReference type="InterPro" id="IPR043129">
    <property type="entry name" value="ATPase_NBD"/>
</dbReference>
<dbReference type="InterPro" id="IPR050273">
    <property type="entry name" value="GppA/Ppx_hydrolase"/>
</dbReference>
<dbReference type="InterPro" id="IPR023709">
    <property type="entry name" value="Guo-5TP_3DP_PyrP"/>
</dbReference>
<dbReference type="InterPro" id="IPR048950">
    <property type="entry name" value="Ppx_GppA_C"/>
</dbReference>
<dbReference type="InterPro" id="IPR003695">
    <property type="entry name" value="Ppx_GppA_N"/>
</dbReference>
<dbReference type="InterPro" id="IPR030673">
    <property type="entry name" value="PyroPPase_GppA_Ppx"/>
</dbReference>
<dbReference type="NCBIfam" id="NF008260">
    <property type="entry name" value="PRK11031.1"/>
    <property type="match status" value="1"/>
</dbReference>
<dbReference type="PANTHER" id="PTHR30005">
    <property type="entry name" value="EXOPOLYPHOSPHATASE"/>
    <property type="match status" value="1"/>
</dbReference>
<dbReference type="PANTHER" id="PTHR30005:SF0">
    <property type="entry name" value="RETROGRADE REGULATION PROTEIN 2"/>
    <property type="match status" value="1"/>
</dbReference>
<dbReference type="Pfam" id="PF02541">
    <property type="entry name" value="Ppx-GppA"/>
    <property type="match status" value="1"/>
</dbReference>
<dbReference type="Pfam" id="PF21447">
    <property type="entry name" value="Ppx-GppA_III"/>
    <property type="match status" value="1"/>
</dbReference>
<dbReference type="PIRSF" id="PIRSF001267">
    <property type="entry name" value="Pyrophosphatase_GppA_Ppx"/>
    <property type="match status" value="1"/>
</dbReference>
<dbReference type="SUPFAM" id="SSF53067">
    <property type="entry name" value="Actin-like ATPase domain"/>
    <property type="match status" value="2"/>
</dbReference>
<dbReference type="SUPFAM" id="SSF109604">
    <property type="entry name" value="HD-domain/PDEase-like"/>
    <property type="match status" value="1"/>
</dbReference>